<accession>Q895L7</accession>
<proteinExistence type="inferred from homology"/>
<comment type="similarity">
    <text evidence="1">Belongs to the UPF0102 family.</text>
</comment>
<keyword id="KW-1185">Reference proteome</keyword>
<feature type="chain" id="PRO_0000167344" description="UPF0102 protein CTC_01256">
    <location>
        <begin position="1"/>
        <end position="122"/>
    </location>
</feature>
<evidence type="ECO:0000255" key="1">
    <source>
        <dbReference type="HAMAP-Rule" id="MF_00048"/>
    </source>
</evidence>
<name>Y1256_CLOTE</name>
<protein>
    <recommendedName>
        <fullName evidence="1">UPF0102 protein CTC_01256</fullName>
    </recommendedName>
</protein>
<reference key="1">
    <citation type="journal article" date="2003" name="Proc. Natl. Acad. Sci. U.S.A.">
        <title>The genome sequence of Clostridium tetani, the causative agent of tetanus disease.</title>
        <authorList>
            <person name="Brueggemann H."/>
            <person name="Baeumer S."/>
            <person name="Fricke W.F."/>
            <person name="Wiezer A."/>
            <person name="Liesegang H."/>
            <person name="Decker I."/>
            <person name="Herzberg C."/>
            <person name="Martinez-Arias R."/>
            <person name="Merkl R."/>
            <person name="Henne A."/>
            <person name="Gottschalk G."/>
        </authorList>
    </citation>
    <scope>NUCLEOTIDE SEQUENCE [LARGE SCALE GENOMIC DNA]</scope>
    <source>
        <strain>Massachusetts / E88</strain>
    </source>
</reference>
<sequence length="122" mass="14263">MNSYNKQIGNIGEAVAENYLIQNGYIILDRNFSCRVGEIDIIGKDGDIISFLEVKSRYGNLYGSPGESVNFAKQYKIYKTAQLYILKKKLNRFYFRFDVIEIIFNNYNDDYSIRLIKDAFQL</sequence>
<gene>
    <name type="ordered locus">CTC_01256</name>
</gene>
<dbReference type="EMBL" id="AE015927">
    <property type="protein sequence ID" value="AAO35823.1"/>
    <property type="molecule type" value="Genomic_DNA"/>
</dbReference>
<dbReference type="RefSeq" id="WP_011099485.1">
    <property type="nucleotide sequence ID" value="NC_004557.1"/>
</dbReference>
<dbReference type="SMR" id="Q895L7"/>
<dbReference type="STRING" id="212717.CTC_01256"/>
<dbReference type="GeneID" id="24254020"/>
<dbReference type="KEGG" id="ctc:CTC_01256"/>
<dbReference type="HOGENOM" id="CLU_115353_2_1_9"/>
<dbReference type="OrthoDB" id="9802516at2"/>
<dbReference type="Proteomes" id="UP000001412">
    <property type="component" value="Chromosome"/>
</dbReference>
<dbReference type="GO" id="GO:0003676">
    <property type="term" value="F:nucleic acid binding"/>
    <property type="evidence" value="ECO:0007669"/>
    <property type="project" value="InterPro"/>
</dbReference>
<dbReference type="CDD" id="cd20736">
    <property type="entry name" value="PoNe_Nuclease"/>
    <property type="match status" value="1"/>
</dbReference>
<dbReference type="Gene3D" id="3.40.1350.10">
    <property type="match status" value="1"/>
</dbReference>
<dbReference type="HAMAP" id="MF_00048">
    <property type="entry name" value="UPF0102"/>
    <property type="match status" value="1"/>
</dbReference>
<dbReference type="InterPro" id="IPR011335">
    <property type="entry name" value="Restrct_endonuc-II-like"/>
</dbReference>
<dbReference type="InterPro" id="IPR011856">
    <property type="entry name" value="tRNA_endonuc-like_dom_sf"/>
</dbReference>
<dbReference type="InterPro" id="IPR003509">
    <property type="entry name" value="UPF0102_YraN-like"/>
</dbReference>
<dbReference type="NCBIfam" id="NF009150">
    <property type="entry name" value="PRK12497.1-3"/>
    <property type="match status" value="1"/>
</dbReference>
<dbReference type="NCBIfam" id="TIGR00252">
    <property type="entry name" value="YraN family protein"/>
    <property type="match status" value="1"/>
</dbReference>
<dbReference type="PANTHER" id="PTHR34039">
    <property type="entry name" value="UPF0102 PROTEIN YRAN"/>
    <property type="match status" value="1"/>
</dbReference>
<dbReference type="PANTHER" id="PTHR34039:SF1">
    <property type="entry name" value="UPF0102 PROTEIN YRAN"/>
    <property type="match status" value="1"/>
</dbReference>
<dbReference type="Pfam" id="PF02021">
    <property type="entry name" value="UPF0102"/>
    <property type="match status" value="1"/>
</dbReference>
<dbReference type="SUPFAM" id="SSF52980">
    <property type="entry name" value="Restriction endonuclease-like"/>
    <property type="match status" value="1"/>
</dbReference>
<organism>
    <name type="scientific">Clostridium tetani (strain Massachusetts / E88)</name>
    <dbReference type="NCBI Taxonomy" id="212717"/>
    <lineage>
        <taxon>Bacteria</taxon>
        <taxon>Bacillati</taxon>
        <taxon>Bacillota</taxon>
        <taxon>Clostridia</taxon>
        <taxon>Eubacteriales</taxon>
        <taxon>Clostridiaceae</taxon>
        <taxon>Clostridium</taxon>
    </lineage>
</organism>